<comment type="function">
    <text evidence="1">Component of the cytochrome b6-f complex, which mediates electron transfer between photosystem II (PSII) and photosystem I (PSI), cyclic electron flow around PSI, and state transitions.</text>
</comment>
<comment type="subunit">
    <text evidence="1">The 4 large subunits of the cytochrome b6-f complex are cytochrome b6, subunit IV (17 kDa polypeptide, PetD), cytochrome f and the Rieske protein, while the 4 small subunits are PetG, PetL, PetM and PetN. The complex functions as a dimer (By similarity).</text>
</comment>
<comment type="subcellular location">
    <subcellularLocation>
        <location evidence="1">Plastid</location>
        <location evidence="1">Chloroplast thylakoid membrane</location>
        <topology evidence="1">Single-pass membrane protein</topology>
    </subcellularLocation>
</comment>
<comment type="similarity">
    <text evidence="3">Belongs to the PetN family.</text>
</comment>
<evidence type="ECO:0000250" key="1"/>
<evidence type="ECO:0000255" key="2"/>
<evidence type="ECO:0000305" key="3"/>
<proteinExistence type="inferred from homology"/>
<keyword id="KW-0150">Chloroplast</keyword>
<keyword id="KW-0249">Electron transport</keyword>
<keyword id="KW-0472">Membrane</keyword>
<keyword id="KW-0602">Photosynthesis</keyword>
<keyword id="KW-0934">Plastid</keyword>
<keyword id="KW-1185">Reference proteome</keyword>
<keyword id="KW-0793">Thylakoid</keyword>
<keyword id="KW-0812">Transmembrane</keyword>
<keyword id="KW-1133">Transmembrane helix</keyword>
<keyword id="KW-0813">Transport</keyword>
<organism>
    <name type="scientific">Oryza sativa subsp. japonica</name>
    <name type="common">Rice</name>
    <dbReference type="NCBI Taxonomy" id="39947"/>
    <lineage>
        <taxon>Eukaryota</taxon>
        <taxon>Viridiplantae</taxon>
        <taxon>Streptophyta</taxon>
        <taxon>Embryophyta</taxon>
        <taxon>Tracheophyta</taxon>
        <taxon>Spermatophyta</taxon>
        <taxon>Magnoliopsida</taxon>
        <taxon>Liliopsida</taxon>
        <taxon>Poales</taxon>
        <taxon>Poaceae</taxon>
        <taxon>BOP clade</taxon>
        <taxon>Oryzoideae</taxon>
        <taxon>Oryzeae</taxon>
        <taxon>Oryzinae</taxon>
        <taxon>Oryza</taxon>
        <taxon>Oryza sativa</taxon>
    </lineage>
</organism>
<name>PETN_ORYSJ</name>
<feature type="chain" id="PRO_0000217121" description="Cytochrome b6-f complex subunit 8">
    <location>
        <begin position="1"/>
        <end position="29"/>
    </location>
</feature>
<feature type="transmembrane region" description="Helical" evidence="2">
    <location>
        <begin position="3"/>
        <end position="23"/>
    </location>
</feature>
<sequence length="29" mass="3170">MDIVSLAWAALMVVFTFSLSLVVWGRSGL</sequence>
<gene>
    <name type="primary">petN</name>
    <name type="synonym">ycf6</name>
    <name type="ordered locus">LOC_Osp1g00230</name>
</gene>
<accession>P61042</accession>
<accession>P12178</accession>
<accession>P56789</accession>
<protein>
    <recommendedName>
        <fullName>Cytochrome b6-f complex subunit 8</fullName>
    </recommendedName>
    <alternativeName>
        <fullName>Cytochrome b6-f complex subunit PetN</fullName>
    </alternativeName>
    <alternativeName>
        <fullName>Cytochrome b6-f complex subunit VIII</fullName>
    </alternativeName>
</protein>
<geneLocation type="chloroplast"/>
<reference key="1">
    <citation type="journal article" date="1989" name="Mol. Gen. Genet.">
        <title>The complete sequence of the rice (Oryza sativa) chloroplast genome: intermolecular recombination between distinct tRNA genes accounts for a major plastid DNA inversion during the evolution of the cereals.</title>
        <authorList>
            <person name="Hiratsuka J."/>
            <person name="Shimada H."/>
            <person name="Whittier R."/>
            <person name="Ishibashi T."/>
            <person name="Sakamoto M."/>
            <person name="Mori M."/>
            <person name="Kondo C."/>
            <person name="Honji Y."/>
            <person name="Sun C.-R."/>
            <person name="Meng B.-Y."/>
            <person name="Li Y.-Q."/>
            <person name="Kanno A."/>
            <person name="Nishizawa Y."/>
            <person name="Hirai A."/>
            <person name="Shinozaki K."/>
            <person name="Sugiura M."/>
        </authorList>
    </citation>
    <scope>NUCLEOTIDE SEQUENCE [LARGE SCALE GENOMIC DNA]</scope>
    <source>
        <strain>cv. Nipponbare</strain>
    </source>
</reference>
<reference key="2">
    <citation type="journal article" date="2004" name="Plant Physiol.">
        <title>A comparison of rice chloroplast genomes.</title>
        <authorList>
            <person name="Tang J."/>
            <person name="Xia H."/>
            <person name="Cao M."/>
            <person name="Zhang X."/>
            <person name="Zeng W."/>
            <person name="Hu S."/>
            <person name="Tong W."/>
            <person name="Wang J."/>
            <person name="Wang J."/>
            <person name="Yu J."/>
            <person name="Yang H."/>
            <person name="Zhu L."/>
        </authorList>
    </citation>
    <scope>NUCLEOTIDE SEQUENCE [LARGE SCALE GENOMIC DNA]</scope>
    <source>
        <strain>cv. Nipponbare</strain>
    </source>
</reference>
<dbReference type="EMBL" id="X15901">
    <property type="protein sequence ID" value="CAA33985.1"/>
    <property type="molecule type" value="Genomic_DNA"/>
</dbReference>
<dbReference type="EMBL" id="AY522330">
    <property type="status" value="NOT_ANNOTATED_CDS"/>
    <property type="molecule type" value="Genomic_DNA"/>
</dbReference>
<dbReference type="PIR" id="JQ0212">
    <property type="entry name" value="JQ0212"/>
</dbReference>
<dbReference type="RefSeq" id="NP_039372.1">
    <property type="nucleotide sequence ID" value="NC_001320.1"/>
</dbReference>
<dbReference type="SMR" id="P61042"/>
<dbReference type="FunCoup" id="P61042">
    <property type="interactions" value="56"/>
</dbReference>
<dbReference type="PaxDb" id="39947-P61042"/>
<dbReference type="GeneID" id="3131455"/>
<dbReference type="KEGG" id="dosa:CAA33985.1"/>
<dbReference type="KEGG" id="osa:3131455"/>
<dbReference type="InParanoid" id="P61042"/>
<dbReference type="Proteomes" id="UP000059680">
    <property type="component" value="Chloroplast"/>
</dbReference>
<dbReference type="GO" id="GO:0009535">
    <property type="term" value="C:chloroplast thylakoid membrane"/>
    <property type="evidence" value="ECO:0007669"/>
    <property type="project" value="UniProtKB-SubCell"/>
</dbReference>
<dbReference type="GO" id="GO:0009512">
    <property type="term" value="C:cytochrome b6f complex"/>
    <property type="evidence" value="ECO:0007669"/>
    <property type="project" value="InterPro"/>
</dbReference>
<dbReference type="GO" id="GO:0009536">
    <property type="term" value="C:plastid"/>
    <property type="evidence" value="ECO:0000305"/>
    <property type="project" value="Gramene"/>
</dbReference>
<dbReference type="GO" id="GO:0045158">
    <property type="term" value="F:electron transporter, transferring electrons within cytochrome b6/f complex of photosystem II activity"/>
    <property type="evidence" value="ECO:0007669"/>
    <property type="project" value="InterPro"/>
</dbReference>
<dbReference type="GO" id="GO:0017004">
    <property type="term" value="P:cytochrome complex assembly"/>
    <property type="evidence" value="ECO:0007669"/>
    <property type="project" value="UniProtKB-UniRule"/>
</dbReference>
<dbReference type="GO" id="GO:0015979">
    <property type="term" value="P:photosynthesis"/>
    <property type="evidence" value="ECO:0007669"/>
    <property type="project" value="UniProtKB-KW"/>
</dbReference>
<dbReference type="HAMAP" id="MF_00395">
    <property type="entry name" value="Cytb6_f_PetN"/>
    <property type="match status" value="1"/>
</dbReference>
<dbReference type="InterPro" id="IPR036143">
    <property type="entry name" value="Cytochr_b6-f_cplx_su8_sf"/>
</dbReference>
<dbReference type="InterPro" id="IPR005497">
    <property type="entry name" value="Cytochrome_b6-f_cplx_su8"/>
</dbReference>
<dbReference type="Pfam" id="PF03742">
    <property type="entry name" value="PetN"/>
    <property type="match status" value="1"/>
</dbReference>
<dbReference type="SUPFAM" id="SSF103451">
    <property type="entry name" value="PetN subunit of the cytochrome b6f complex"/>
    <property type="match status" value="1"/>
</dbReference>